<comment type="function">
    <text evidence="1">Pyrophosphatase that catalyzes the hydrolysis of nucleoside triphosphates to their monophosphate derivatives, with a high preference for the non-canonical purine nucleotides XTP (xanthosine triphosphate), dITP (deoxyinosine triphosphate) and ITP. Seems to function as a house-cleaning enzyme that removes non-canonical purine nucleotides from the nucleotide pool, thus preventing their incorporation into DNA/RNA and avoiding chromosomal lesions.</text>
</comment>
<comment type="catalytic activity">
    <reaction evidence="1">
        <text>XTP + H2O = XMP + diphosphate + H(+)</text>
        <dbReference type="Rhea" id="RHEA:28610"/>
        <dbReference type="ChEBI" id="CHEBI:15377"/>
        <dbReference type="ChEBI" id="CHEBI:15378"/>
        <dbReference type="ChEBI" id="CHEBI:33019"/>
        <dbReference type="ChEBI" id="CHEBI:57464"/>
        <dbReference type="ChEBI" id="CHEBI:61314"/>
        <dbReference type="EC" id="3.6.1.66"/>
    </reaction>
</comment>
<comment type="catalytic activity">
    <reaction evidence="1">
        <text>dITP + H2O = dIMP + diphosphate + H(+)</text>
        <dbReference type="Rhea" id="RHEA:28342"/>
        <dbReference type="ChEBI" id="CHEBI:15377"/>
        <dbReference type="ChEBI" id="CHEBI:15378"/>
        <dbReference type="ChEBI" id="CHEBI:33019"/>
        <dbReference type="ChEBI" id="CHEBI:61194"/>
        <dbReference type="ChEBI" id="CHEBI:61382"/>
        <dbReference type="EC" id="3.6.1.66"/>
    </reaction>
</comment>
<comment type="catalytic activity">
    <reaction evidence="1">
        <text>ITP + H2O = IMP + diphosphate + H(+)</text>
        <dbReference type="Rhea" id="RHEA:29399"/>
        <dbReference type="ChEBI" id="CHEBI:15377"/>
        <dbReference type="ChEBI" id="CHEBI:15378"/>
        <dbReference type="ChEBI" id="CHEBI:33019"/>
        <dbReference type="ChEBI" id="CHEBI:58053"/>
        <dbReference type="ChEBI" id="CHEBI:61402"/>
        <dbReference type="EC" id="3.6.1.66"/>
    </reaction>
</comment>
<comment type="cofactor">
    <cofactor evidence="1">
        <name>Mg(2+)</name>
        <dbReference type="ChEBI" id="CHEBI:18420"/>
    </cofactor>
    <text evidence="1">Binds 1 Mg(2+) ion per subunit.</text>
</comment>
<comment type="subunit">
    <text evidence="1">Homodimer.</text>
</comment>
<comment type="similarity">
    <text evidence="1">Belongs to the HAM1 NTPase family.</text>
</comment>
<dbReference type="EC" id="3.6.1.66" evidence="1"/>
<dbReference type="EMBL" id="AE017143">
    <property type="protein sequence ID" value="AAP96162.1"/>
    <property type="molecule type" value="Genomic_DNA"/>
</dbReference>
<dbReference type="RefSeq" id="WP_010945211.1">
    <property type="nucleotide sequence ID" value="NC_002940.2"/>
</dbReference>
<dbReference type="SMR" id="Q7VLS3"/>
<dbReference type="STRING" id="233412.HD_1348"/>
<dbReference type="KEGG" id="hdu:HD_1348"/>
<dbReference type="eggNOG" id="COG0127">
    <property type="taxonomic scope" value="Bacteria"/>
</dbReference>
<dbReference type="HOGENOM" id="CLU_082080_0_3_6"/>
<dbReference type="OrthoDB" id="9807456at2"/>
<dbReference type="Proteomes" id="UP000001022">
    <property type="component" value="Chromosome"/>
</dbReference>
<dbReference type="GO" id="GO:0005829">
    <property type="term" value="C:cytosol"/>
    <property type="evidence" value="ECO:0007669"/>
    <property type="project" value="TreeGrafter"/>
</dbReference>
<dbReference type="GO" id="GO:0035870">
    <property type="term" value="F:dITP diphosphatase activity"/>
    <property type="evidence" value="ECO:0007669"/>
    <property type="project" value="RHEA"/>
</dbReference>
<dbReference type="GO" id="GO:0036220">
    <property type="term" value="F:ITP diphosphatase activity"/>
    <property type="evidence" value="ECO:0007669"/>
    <property type="project" value="UniProtKB-EC"/>
</dbReference>
<dbReference type="GO" id="GO:0046872">
    <property type="term" value="F:metal ion binding"/>
    <property type="evidence" value="ECO:0007669"/>
    <property type="project" value="UniProtKB-KW"/>
</dbReference>
<dbReference type="GO" id="GO:0000166">
    <property type="term" value="F:nucleotide binding"/>
    <property type="evidence" value="ECO:0007669"/>
    <property type="project" value="UniProtKB-KW"/>
</dbReference>
<dbReference type="GO" id="GO:0017111">
    <property type="term" value="F:ribonucleoside triphosphate phosphatase activity"/>
    <property type="evidence" value="ECO:0007669"/>
    <property type="project" value="InterPro"/>
</dbReference>
<dbReference type="GO" id="GO:0036222">
    <property type="term" value="F:XTP diphosphatase activity"/>
    <property type="evidence" value="ECO:0007669"/>
    <property type="project" value="RHEA"/>
</dbReference>
<dbReference type="GO" id="GO:0009117">
    <property type="term" value="P:nucleotide metabolic process"/>
    <property type="evidence" value="ECO:0007669"/>
    <property type="project" value="UniProtKB-KW"/>
</dbReference>
<dbReference type="GO" id="GO:0009146">
    <property type="term" value="P:purine nucleoside triphosphate catabolic process"/>
    <property type="evidence" value="ECO:0007669"/>
    <property type="project" value="UniProtKB-UniRule"/>
</dbReference>
<dbReference type="CDD" id="cd00515">
    <property type="entry name" value="HAM1"/>
    <property type="match status" value="1"/>
</dbReference>
<dbReference type="FunFam" id="3.90.950.10:FF:000001">
    <property type="entry name" value="dITP/XTP pyrophosphatase"/>
    <property type="match status" value="1"/>
</dbReference>
<dbReference type="Gene3D" id="3.90.950.10">
    <property type="match status" value="1"/>
</dbReference>
<dbReference type="HAMAP" id="MF_01405">
    <property type="entry name" value="Non_canon_purine_NTPase"/>
    <property type="match status" value="1"/>
</dbReference>
<dbReference type="InterPro" id="IPR020922">
    <property type="entry name" value="dITP/XTP_pyrophosphatase"/>
</dbReference>
<dbReference type="InterPro" id="IPR029001">
    <property type="entry name" value="ITPase-like_fam"/>
</dbReference>
<dbReference type="InterPro" id="IPR002637">
    <property type="entry name" value="RdgB/HAM1"/>
</dbReference>
<dbReference type="NCBIfam" id="TIGR00042">
    <property type="entry name" value="RdgB/HAM1 family non-canonical purine NTP pyrophosphatase"/>
    <property type="match status" value="1"/>
</dbReference>
<dbReference type="PANTHER" id="PTHR11067:SF9">
    <property type="entry name" value="INOSINE TRIPHOSPHATE PYROPHOSPHATASE"/>
    <property type="match status" value="1"/>
</dbReference>
<dbReference type="PANTHER" id="PTHR11067">
    <property type="entry name" value="INOSINE TRIPHOSPHATE PYROPHOSPHATASE/HAM1 PROTEIN"/>
    <property type="match status" value="1"/>
</dbReference>
<dbReference type="Pfam" id="PF01725">
    <property type="entry name" value="Ham1p_like"/>
    <property type="match status" value="1"/>
</dbReference>
<dbReference type="SUPFAM" id="SSF52972">
    <property type="entry name" value="ITPase-like"/>
    <property type="match status" value="1"/>
</dbReference>
<sequence length="196" mass="21297">MNRTKIVLATSNKGKVKEMADVLSAFGFEVIAQSEFGLVSPPETGLTFVENALLKARYASKMTGLPAIADDSGLAVDALAGAPGLYSARYAGIEDDDTANRRKLLAEMQNVPDGQRAAKFVSCIVMLKHETDPTPKIAFGECFGEILREERGQNGFGYDALFFYPAKQCTFAELDSTEKKQISHRALALVALQKQL</sequence>
<name>IXTPA_HAEDU</name>
<organism>
    <name type="scientific">Haemophilus ducreyi (strain 35000HP / ATCC 700724)</name>
    <dbReference type="NCBI Taxonomy" id="233412"/>
    <lineage>
        <taxon>Bacteria</taxon>
        <taxon>Pseudomonadati</taxon>
        <taxon>Pseudomonadota</taxon>
        <taxon>Gammaproteobacteria</taxon>
        <taxon>Pasteurellales</taxon>
        <taxon>Pasteurellaceae</taxon>
        <taxon>Haemophilus</taxon>
    </lineage>
</organism>
<protein>
    <recommendedName>
        <fullName evidence="1">dITP/XTP pyrophosphatase</fullName>
        <ecNumber evidence="1">3.6.1.66</ecNumber>
    </recommendedName>
    <alternativeName>
        <fullName evidence="1">Non-canonical purine NTP pyrophosphatase</fullName>
    </alternativeName>
    <alternativeName>
        <fullName evidence="1">Non-standard purine NTP pyrophosphatase</fullName>
    </alternativeName>
    <alternativeName>
        <fullName evidence="1">Nucleoside-triphosphate diphosphatase</fullName>
    </alternativeName>
    <alternativeName>
        <fullName evidence="1">Nucleoside-triphosphate pyrophosphatase</fullName>
        <shortName evidence="1">NTPase</shortName>
    </alternativeName>
</protein>
<accession>Q7VLS3</accession>
<keyword id="KW-0378">Hydrolase</keyword>
<keyword id="KW-0460">Magnesium</keyword>
<keyword id="KW-0479">Metal-binding</keyword>
<keyword id="KW-0546">Nucleotide metabolism</keyword>
<keyword id="KW-0547">Nucleotide-binding</keyword>
<keyword id="KW-1185">Reference proteome</keyword>
<evidence type="ECO:0000255" key="1">
    <source>
        <dbReference type="HAMAP-Rule" id="MF_01405"/>
    </source>
</evidence>
<proteinExistence type="inferred from homology"/>
<feature type="chain" id="PRO_0000178173" description="dITP/XTP pyrophosphatase">
    <location>
        <begin position="1"/>
        <end position="196"/>
    </location>
</feature>
<feature type="active site" description="Proton acceptor" evidence="1">
    <location>
        <position position="71"/>
    </location>
</feature>
<feature type="binding site" evidence="1">
    <location>
        <begin position="10"/>
        <end position="15"/>
    </location>
    <ligand>
        <name>substrate</name>
    </ligand>
</feature>
<feature type="binding site" evidence="1">
    <location>
        <position position="71"/>
    </location>
    <ligand>
        <name>Mg(2+)</name>
        <dbReference type="ChEBI" id="CHEBI:18420"/>
    </ligand>
</feature>
<feature type="binding site" evidence="1">
    <location>
        <position position="72"/>
    </location>
    <ligand>
        <name>substrate</name>
    </ligand>
</feature>
<feature type="binding site" evidence="1">
    <location>
        <begin position="156"/>
        <end position="159"/>
    </location>
    <ligand>
        <name>substrate</name>
    </ligand>
</feature>
<feature type="binding site" evidence="1">
    <location>
        <position position="179"/>
    </location>
    <ligand>
        <name>substrate</name>
    </ligand>
</feature>
<feature type="binding site" evidence="1">
    <location>
        <begin position="184"/>
        <end position="185"/>
    </location>
    <ligand>
        <name>substrate</name>
    </ligand>
</feature>
<reference key="1">
    <citation type="submission" date="2003-06" db="EMBL/GenBank/DDBJ databases">
        <title>The complete genome sequence of Haemophilus ducreyi.</title>
        <authorList>
            <person name="Munson R.S. Jr."/>
            <person name="Ray W.C."/>
            <person name="Mahairas G."/>
            <person name="Sabo P."/>
            <person name="Mungur R."/>
            <person name="Johnson L."/>
            <person name="Nguyen D."/>
            <person name="Wang J."/>
            <person name="Forst C."/>
            <person name="Hood L."/>
        </authorList>
    </citation>
    <scope>NUCLEOTIDE SEQUENCE [LARGE SCALE GENOMIC DNA]</scope>
    <source>
        <strain>35000HP / ATCC 700724</strain>
    </source>
</reference>
<gene>
    <name type="ordered locus">HD_1348</name>
</gene>